<dbReference type="EC" id="2.1.1.207" evidence="1"/>
<dbReference type="EMBL" id="L13970">
    <property type="status" value="NOT_ANNOTATED_CDS"/>
    <property type="molecule type" value="Unassigned_DNA"/>
</dbReference>
<dbReference type="EMBL" id="U00039">
    <property type="protein sequence ID" value="AAB18583.1"/>
    <property type="molecule type" value="Genomic_DNA"/>
</dbReference>
<dbReference type="EMBL" id="U00096">
    <property type="protein sequence ID" value="AAC76630.1"/>
    <property type="molecule type" value="Genomic_DNA"/>
</dbReference>
<dbReference type="EMBL" id="AP009048">
    <property type="protein sequence ID" value="BAE77686.1"/>
    <property type="molecule type" value="Genomic_DNA"/>
</dbReference>
<dbReference type="EMBL" id="M34333">
    <property type="status" value="NOT_ANNOTATED_CDS"/>
    <property type="molecule type" value="Genomic_DNA"/>
</dbReference>
<dbReference type="PIR" id="S47827">
    <property type="entry name" value="S47827"/>
</dbReference>
<dbReference type="RefSeq" id="NP_418063.1">
    <property type="nucleotide sequence ID" value="NC_000913.3"/>
</dbReference>
<dbReference type="RefSeq" id="WP_000932347.1">
    <property type="nucleotide sequence ID" value="NZ_SSZK01000022.1"/>
</dbReference>
<dbReference type="PDB" id="4JAK">
    <property type="method" value="X-ray"/>
    <property type="resolution" value="2.00 A"/>
    <property type="chains" value="A/B=2-157"/>
</dbReference>
<dbReference type="PDB" id="4JAL">
    <property type="method" value="X-ray"/>
    <property type="resolution" value="2.00 A"/>
    <property type="chains" value="A/B=2-157"/>
</dbReference>
<dbReference type="PDBsum" id="4JAK"/>
<dbReference type="PDBsum" id="4JAL"/>
<dbReference type="SMR" id="P0AGJ7"/>
<dbReference type="BioGRID" id="4262552">
    <property type="interactions" value="61"/>
</dbReference>
<dbReference type="FunCoup" id="P0AGJ7">
    <property type="interactions" value="332"/>
</dbReference>
<dbReference type="IntAct" id="P0AGJ7">
    <property type="interactions" value="7"/>
</dbReference>
<dbReference type="STRING" id="511145.b3606"/>
<dbReference type="jPOST" id="P0AGJ7"/>
<dbReference type="PaxDb" id="511145-b3606"/>
<dbReference type="EnsemblBacteria" id="AAC76630">
    <property type="protein sequence ID" value="AAC76630"/>
    <property type="gene ID" value="b3606"/>
</dbReference>
<dbReference type="GeneID" id="948119"/>
<dbReference type="KEGG" id="ecj:JW3581"/>
<dbReference type="KEGG" id="eco:b3606"/>
<dbReference type="KEGG" id="ecoc:C3026_19555"/>
<dbReference type="PATRIC" id="fig|1411691.4.peg.3100"/>
<dbReference type="EchoBASE" id="EB1834"/>
<dbReference type="eggNOG" id="COG0219">
    <property type="taxonomic scope" value="Bacteria"/>
</dbReference>
<dbReference type="HOGENOM" id="CLU_110125_1_0_6"/>
<dbReference type="InParanoid" id="P0AGJ7"/>
<dbReference type="OMA" id="AGLDYWH"/>
<dbReference type="OrthoDB" id="9789043at2"/>
<dbReference type="PhylomeDB" id="P0AGJ7"/>
<dbReference type="BioCyc" id="EcoCyc:EG11888-MONOMER"/>
<dbReference type="BioCyc" id="MetaCyc:EG11888-MONOMER"/>
<dbReference type="BRENDA" id="2.1.1.207">
    <property type="organism ID" value="2026"/>
</dbReference>
<dbReference type="EvolutionaryTrace" id="P0AGJ7"/>
<dbReference type="PRO" id="PR:P0AGJ7"/>
<dbReference type="Proteomes" id="UP000000625">
    <property type="component" value="Chromosome"/>
</dbReference>
<dbReference type="GO" id="GO:0005737">
    <property type="term" value="C:cytoplasm"/>
    <property type="evidence" value="ECO:0007669"/>
    <property type="project" value="UniProtKB-SubCell"/>
</dbReference>
<dbReference type="GO" id="GO:0042803">
    <property type="term" value="F:protein homodimerization activity"/>
    <property type="evidence" value="ECO:0000314"/>
    <property type="project" value="EcoCyc"/>
</dbReference>
<dbReference type="GO" id="GO:0003723">
    <property type="term" value="F:RNA binding"/>
    <property type="evidence" value="ECO:0007669"/>
    <property type="project" value="InterPro"/>
</dbReference>
<dbReference type="GO" id="GO:0141102">
    <property type="term" value="F:tRNA (5-carboxymethylaminomethyluridine(34)-2'-O)-methyltransferase activity"/>
    <property type="evidence" value="ECO:0007669"/>
    <property type="project" value="RHEA"/>
</dbReference>
<dbReference type="GO" id="GO:0141098">
    <property type="term" value="F:tRNA (cytidine(34)-2'-O)-methyltransferase activity"/>
    <property type="evidence" value="ECO:0007669"/>
    <property type="project" value="RHEA"/>
</dbReference>
<dbReference type="GO" id="GO:0002131">
    <property type="term" value="P:wobble position cytosine ribose methylation"/>
    <property type="evidence" value="ECO:0000315"/>
    <property type="project" value="EcoCyc"/>
</dbReference>
<dbReference type="GO" id="GO:0002132">
    <property type="term" value="P:wobble position uridine ribose methylation"/>
    <property type="evidence" value="ECO:0000315"/>
    <property type="project" value="EcoCyc"/>
</dbReference>
<dbReference type="CDD" id="cd18094">
    <property type="entry name" value="SpoU-like_TrmL"/>
    <property type="match status" value="1"/>
</dbReference>
<dbReference type="FunFam" id="3.40.1280.10:FF:000002">
    <property type="entry name" value="Peptidylprolyl isomerase"/>
    <property type="match status" value="1"/>
</dbReference>
<dbReference type="Gene3D" id="3.40.1280.10">
    <property type="match status" value="1"/>
</dbReference>
<dbReference type="HAMAP" id="MF_01885">
    <property type="entry name" value="tRNA_methyltr_TrmL"/>
    <property type="match status" value="1"/>
</dbReference>
<dbReference type="InterPro" id="IPR029028">
    <property type="entry name" value="Alpha/beta_knot_MTases"/>
</dbReference>
<dbReference type="InterPro" id="IPR001537">
    <property type="entry name" value="SpoU_MeTrfase"/>
</dbReference>
<dbReference type="InterPro" id="IPR016914">
    <property type="entry name" value="TrmL"/>
</dbReference>
<dbReference type="InterPro" id="IPR029026">
    <property type="entry name" value="tRNA_m1G_MTases_N"/>
</dbReference>
<dbReference type="NCBIfam" id="NF007683">
    <property type="entry name" value="PRK10358.1"/>
    <property type="match status" value="1"/>
</dbReference>
<dbReference type="NCBIfam" id="TIGR00185">
    <property type="entry name" value="tRNA_yibK_trmL"/>
    <property type="match status" value="1"/>
</dbReference>
<dbReference type="PANTHER" id="PTHR42971">
    <property type="entry name" value="TRNA (CYTIDINE(34)-2'-O)-METHYLTRANSFERASE"/>
    <property type="match status" value="1"/>
</dbReference>
<dbReference type="PANTHER" id="PTHR42971:SF1">
    <property type="entry name" value="TRNA (CYTIDINE(34)-2'-O)-METHYLTRANSFERASE"/>
    <property type="match status" value="1"/>
</dbReference>
<dbReference type="Pfam" id="PF00588">
    <property type="entry name" value="SpoU_methylase"/>
    <property type="match status" value="1"/>
</dbReference>
<dbReference type="PIRSF" id="PIRSF029256">
    <property type="entry name" value="SpoU_TrmH_prd"/>
    <property type="match status" value="1"/>
</dbReference>
<dbReference type="SUPFAM" id="SSF75217">
    <property type="entry name" value="alpha/beta knot"/>
    <property type="match status" value="1"/>
</dbReference>
<gene>
    <name evidence="1" type="primary">trmL</name>
    <name type="synonym">yibK</name>
    <name type="ordered locus">b3606</name>
    <name type="ordered locus">JW3581</name>
</gene>
<feature type="chain" id="PRO_0000159817" description="tRNA (cytidine(34)-2'-O)-methyltransferase">
    <location>
        <begin position="1"/>
        <end position="157"/>
    </location>
</feature>
<feature type="binding site" evidence="1">
    <location>
        <position position="78"/>
    </location>
    <ligand>
        <name>S-adenosyl-L-methionine</name>
        <dbReference type="ChEBI" id="CHEBI:59789"/>
    </ligand>
</feature>
<feature type="binding site" evidence="1">
    <location>
        <position position="100"/>
    </location>
    <ligand>
        <name>S-adenosyl-L-methionine</name>
        <dbReference type="ChEBI" id="CHEBI:59789"/>
    </ligand>
</feature>
<feature type="binding site" evidence="1">
    <location>
        <position position="122"/>
    </location>
    <ligand>
        <name>S-adenosyl-L-methionine</name>
        <dbReference type="ChEBI" id="CHEBI:59789"/>
    </ligand>
</feature>
<feature type="binding site" evidence="1">
    <location>
        <position position="130"/>
    </location>
    <ligand>
        <name>S-adenosyl-L-methionine</name>
        <dbReference type="ChEBI" id="CHEBI:59789"/>
    </ligand>
</feature>
<feature type="strand" evidence="4">
    <location>
        <begin position="3"/>
        <end position="8"/>
    </location>
</feature>
<feature type="helix" evidence="4">
    <location>
        <begin position="12"/>
        <end position="25"/>
    </location>
</feature>
<feature type="strand" evidence="4">
    <location>
        <begin position="28"/>
        <end position="33"/>
    </location>
</feature>
<feature type="helix" evidence="4">
    <location>
        <begin position="42"/>
        <end position="44"/>
    </location>
</feature>
<feature type="helix" evidence="4">
    <location>
        <begin position="51"/>
        <end position="56"/>
    </location>
</feature>
<feature type="strand" evidence="4">
    <location>
        <begin position="57"/>
        <end position="62"/>
    </location>
</feature>
<feature type="helix" evidence="4">
    <location>
        <begin position="63"/>
        <end position="70"/>
    </location>
</feature>
<feature type="strand" evidence="4">
    <location>
        <begin position="73"/>
        <end position="78"/>
    </location>
</feature>
<feature type="strand" evidence="4">
    <location>
        <begin position="83"/>
        <end position="85"/>
    </location>
</feature>
<feature type="turn" evidence="4">
    <location>
        <begin position="86"/>
        <end position="88"/>
    </location>
</feature>
<feature type="strand" evidence="4">
    <location>
        <begin position="95"/>
        <end position="99"/>
    </location>
</feature>
<feature type="turn" evidence="5">
    <location>
        <begin position="102"/>
        <end position="104"/>
    </location>
</feature>
<feature type="helix" evidence="4">
    <location>
        <begin position="108"/>
        <end position="111"/>
    </location>
</feature>
<feature type="helix" evidence="4">
    <location>
        <begin position="116"/>
        <end position="118"/>
    </location>
</feature>
<feature type="strand" evidence="4">
    <location>
        <begin position="119"/>
        <end position="121"/>
    </location>
</feature>
<feature type="helix" evidence="4">
    <location>
        <begin position="133"/>
        <end position="147"/>
    </location>
</feature>
<evidence type="ECO:0000255" key="1">
    <source>
        <dbReference type="HAMAP-Rule" id="MF_01885"/>
    </source>
</evidence>
<evidence type="ECO:0000269" key="2">
    <source>
    </source>
</evidence>
<evidence type="ECO:0000305" key="3"/>
<evidence type="ECO:0007829" key="4">
    <source>
        <dbReference type="PDB" id="4JAK"/>
    </source>
</evidence>
<evidence type="ECO:0007829" key="5">
    <source>
        <dbReference type="PDB" id="4JAL"/>
    </source>
</evidence>
<sequence>MLNIVLYEPEIPPNTGNIIRLCANTGFRLHIIEPMGFAWDDKRLRRAGLDYHEFTAVTRHHDYRAFLEAENPQRLFALTTKGTPAHSAVSYQDGDYLMFGPETRGLPASILDALPAEQKIRIPMVPDSRSMNLSNAVSVVVYEAWRQLGYPGAVLRD</sequence>
<reference key="1">
    <citation type="journal article" date="1993" name="J. Bacteriol.">
        <title>Three overlapping lct genes involved in L-lactate utilization by Escherichia coli.</title>
        <authorList>
            <person name="Dong J.M."/>
            <person name="Taylor J.S."/>
            <person name="Latour D.J."/>
            <person name="Iuchi S."/>
            <person name="Lin E.C.C."/>
        </authorList>
    </citation>
    <scope>NUCLEOTIDE SEQUENCE [GENOMIC DNA]</scope>
    <source>
        <strain>K12</strain>
    </source>
</reference>
<reference key="2">
    <citation type="journal article" date="1994" name="Nucleic Acids Res.">
        <title>Analysis of the Escherichia coli genome. V. DNA sequence of the region from 76.0 to 81.5 minutes.</title>
        <authorList>
            <person name="Sofia H.J."/>
            <person name="Burland V."/>
            <person name="Daniels D.L."/>
            <person name="Plunkett G. III"/>
            <person name="Blattner F.R."/>
        </authorList>
    </citation>
    <scope>NUCLEOTIDE SEQUENCE [LARGE SCALE GENOMIC DNA]</scope>
    <source>
        <strain>K12 / MG1655 / ATCC 47076</strain>
    </source>
</reference>
<reference key="3">
    <citation type="journal article" date="1997" name="Science">
        <title>The complete genome sequence of Escherichia coli K-12.</title>
        <authorList>
            <person name="Blattner F.R."/>
            <person name="Plunkett G. III"/>
            <person name="Bloch C.A."/>
            <person name="Perna N.T."/>
            <person name="Burland V."/>
            <person name="Riley M."/>
            <person name="Collado-Vides J."/>
            <person name="Glasner J.D."/>
            <person name="Rode C.K."/>
            <person name="Mayhew G.F."/>
            <person name="Gregor J."/>
            <person name="Davis N.W."/>
            <person name="Kirkpatrick H.A."/>
            <person name="Goeden M.A."/>
            <person name="Rose D.J."/>
            <person name="Mau B."/>
            <person name="Shao Y."/>
        </authorList>
    </citation>
    <scope>NUCLEOTIDE SEQUENCE [LARGE SCALE GENOMIC DNA]</scope>
    <source>
        <strain>K12 / MG1655 / ATCC 47076</strain>
    </source>
</reference>
<reference key="4">
    <citation type="journal article" date="2006" name="Mol. Syst. Biol.">
        <title>Highly accurate genome sequences of Escherichia coli K-12 strains MG1655 and W3110.</title>
        <authorList>
            <person name="Hayashi K."/>
            <person name="Morooka N."/>
            <person name="Yamamoto Y."/>
            <person name="Fujita K."/>
            <person name="Isono K."/>
            <person name="Choi S."/>
            <person name="Ohtsubo E."/>
            <person name="Baba T."/>
            <person name="Wanner B.L."/>
            <person name="Mori H."/>
            <person name="Horiuchi T."/>
        </authorList>
    </citation>
    <scope>NUCLEOTIDE SEQUENCE [LARGE SCALE GENOMIC DNA]</scope>
    <source>
        <strain>K12 / W3110 / ATCC 27325 / DSM 5911</strain>
    </source>
</reference>
<reference key="5">
    <citation type="journal article" date="1990" name="Biochem. Biophys. Res. Commun.">
        <title>Structure and expression of cysX, the second gene in the Escherichia coli K-12 cysE locus.</title>
        <authorList>
            <person name="Tei H."/>
            <person name="Murata K."/>
            <person name="Kimura A."/>
        </authorList>
    </citation>
    <scope>NUCLEOTIDE SEQUENCE [GENOMIC DNA] OF 73-157</scope>
    <source>
        <strain>K12</strain>
    </source>
</reference>
<reference key="6">
    <citation type="journal article" date="1993" name="Nucleic Acids Res.">
        <title>SpoU protein of Escherichia coli belongs to a new family of putative rRNA methylases.</title>
        <authorList>
            <person name="Koonin E.V."/>
            <person name="Rudd K.E."/>
        </authorList>
    </citation>
    <scope>IDENTIFICATION</scope>
</reference>
<reference key="7">
    <citation type="journal article" date="2010" name="RNA">
        <title>YibK is the 2'-O-methyltransferase TrmL that modifies the wobble nucleotide in Escherichia coli tRNALeu isoacceptors.</title>
        <authorList>
            <person name="Benitez-Paez A."/>
            <person name="Villarroya M."/>
            <person name="Douthwaite S."/>
            <person name="Gabaldon T."/>
            <person name="Armengod M.E."/>
        </authorList>
    </citation>
    <scope>FUNCTION AS A METHYLTRANSFERASE</scope>
    <scope>CATALYTIC ACTIVITY</scope>
    <scope>SUBUNIT</scope>
</reference>
<keyword id="KW-0002">3D-structure</keyword>
<keyword id="KW-0963">Cytoplasm</keyword>
<keyword id="KW-0489">Methyltransferase</keyword>
<keyword id="KW-1185">Reference proteome</keyword>
<keyword id="KW-0949">S-adenosyl-L-methionine</keyword>
<keyword id="KW-0808">Transferase</keyword>
<keyword id="KW-0819">tRNA processing</keyword>
<proteinExistence type="evidence at protein level"/>
<name>TRML_ECOLI</name>
<protein>
    <recommendedName>
        <fullName evidence="1">tRNA (cytidine(34)-2'-O)-methyltransferase</fullName>
        <ecNumber evidence="1">2.1.1.207</ecNumber>
    </recommendedName>
    <alternativeName>
        <fullName evidence="1">tRNA (cytidine/uridine-2'-O-)-methyltransferase TrmL</fullName>
    </alternativeName>
</protein>
<organism>
    <name type="scientific">Escherichia coli (strain K12)</name>
    <dbReference type="NCBI Taxonomy" id="83333"/>
    <lineage>
        <taxon>Bacteria</taxon>
        <taxon>Pseudomonadati</taxon>
        <taxon>Pseudomonadota</taxon>
        <taxon>Gammaproteobacteria</taxon>
        <taxon>Enterobacterales</taxon>
        <taxon>Enterobacteriaceae</taxon>
        <taxon>Escherichia</taxon>
    </lineage>
</organism>
<accession>P0AGJ7</accession>
<accession>P33899</accession>
<accession>Q2M7S0</accession>
<comment type="function">
    <text evidence="1 2">Methylates the ribose at the nucleotide 34 wobble position in the two leucyl isoacceptors tRNA(Leu)(CmAA) and tRNA(Leu)(cmnm5UmAA). Catalyzes the methyl transfer from S-adenosyl-L-methionine to the 2'-OH of the wobble nucleotide. Recognition of the target requires a pyridine at position 34 and N(6)-(isopentenyl)-2-methylthioadenosine at position 37.</text>
</comment>
<comment type="catalytic activity">
    <reaction evidence="1 2">
        <text>cytidine(34) in tRNA + S-adenosyl-L-methionine = 2'-O-methylcytidine(34) in tRNA + S-adenosyl-L-homocysteine + H(+)</text>
        <dbReference type="Rhea" id="RHEA:43084"/>
        <dbReference type="Rhea" id="RHEA-COMP:10331"/>
        <dbReference type="Rhea" id="RHEA-COMP:10332"/>
        <dbReference type="ChEBI" id="CHEBI:15378"/>
        <dbReference type="ChEBI" id="CHEBI:57856"/>
        <dbReference type="ChEBI" id="CHEBI:59789"/>
        <dbReference type="ChEBI" id="CHEBI:74495"/>
        <dbReference type="ChEBI" id="CHEBI:82748"/>
        <dbReference type="EC" id="2.1.1.207"/>
    </reaction>
</comment>
<comment type="catalytic activity">
    <reaction evidence="1 2">
        <text>5-carboxymethylaminomethyluridine(34) in tRNA(Leu) + S-adenosyl-L-methionine = 5-carboxymethylaminomethyl-2'-O-methyluridine(34) in tRNA(Leu) + S-adenosyl-L-homocysteine + H(+)</text>
        <dbReference type="Rhea" id="RHEA:43088"/>
        <dbReference type="Rhea" id="RHEA-COMP:10333"/>
        <dbReference type="Rhea" id="RHEA-COMP:10334"/>
        <dbReference type="ChEBI" id="CHEBI:15378"/>
        <dbReference type="ChEBI" id="CHEBI:57856"/>
        <dbReference type="ChEBI" id="CHEBI:59789"/>
        <dbReference type="ChEBI" id="CHEBI:74508"/>
        <dbReference type="ChEBI" id="CHEBI:74511"/>
        <dbReference type="EC" id="2.1.1.207"/>
    </reaction>
</comment>
<comment type="subunit">
    <text evidence="1 2">Homodimer.</text>
</comment>
<comment type="subcellular location">
    <subcellularLocation>
        <location evidence="1">Cytoplasm</location>
    </subcellularLocation>
</comment>
<comment type="similarity">
    <text evidence="1">Belongs to the class IV-like SAM-binding methyltransferase superfamily. RNA methyltransferase TrmH family. TrmL subfamily.</text>
</comment>
<comment type="caution">
    <text evidence="3">Possibly identical to GltE.</text>
</comment>